<gene>
    <name evidence="1" type="primary">mtlD</name>
    <name type="ordered locus">VP0369</name>
</gene>
<accession>Q87SQ3</accession>
<evidence type="ECO:0000255" key="1">
    <source>
        <dbReference type="HAMAP-Rule" id="MF_00196"/>
    </source>
</evidence>
<dbReference type="EC" id="1.1.1.17" evidence="1"/>
<dbReference type="EMBL" id="BA000031">
    <property type="protein sequence ID" value="BAC58632.1"/>
    <property type="molecule type" value="Genomic_DNA"/>
</dbReference>
<dbReference type="RefSeq" id="NP_796748.1">
    <property type="nucleotide sequence ID" value="NC_004603.1"/>
</dbReference>
<dbReference type="RefSeq" id="WP_005480503.1">
    <property type="nucleotide sequence ID" value="NC_004603.1"/>
</dbReference>
<dbReference type="SMR" id="Q87SQ3"/>
<dbReference type="DNASU" id="1187836"/>
<dbReference type="GeneID" id="1187836"/>
<dbReference type="KEGG" id="vpa:VP0369"/>
<dbReference type="PATRIC" id="fig|223926.6.peg.355"/>
<dbReference type="eggNOG" id="COG0246">
    <property type="taxonomic scope" value="Bacteria"/>
</dbReference>
<dbReference type="HOGENOM" id="CLU_036089_2_0_6"/>
<dbReference type="Proteomes" id="UP000002493">
    <property type="component" value="Chromosome 1"/>
</dbReference>
<dbReference type="GO" id="GO:0005829">
    <property type="term" value="C:cytosol"/>
    <property type="evidence" value="ECO:0007669"/>
    <property type="project" value="TreeGrafter"/>
</dbReference>
<dbReference type="GO" id="GO:0008926">
    <property type="term" value="F:mannitol-1-phosphate 5-dehydrogenase activity"/>
    <property type="evidence" value="ECO:0007669"/>
    <property type="project" value="UniProtKB-UniRule"/>
</dbReference>
<dbReference type="GO" id="GO:0019592">
    <property type="term" value="P:mannitol catabolic process"/>
    <property type="evidence" value="ECO:0007669"/>
    <property type="project" value="TreeGrafter"/>
</dbReference>
<dbReference type="FunFam" id="1.10.1040.10:FF:000009">
    <property type="entry name" value="Mannitol-1-phosphate 5-dehydrogenase"/>
    <property type="match status" value="1"/>
</dbReference>
<dbReference type="FunFam" id="3.40.50.720:FF:000075">
    <property type="entry name" value="Mannitol-1-phosphate 5-dehydrogenase"/>
    <property type="match status" value="1"/>
</dbReference>
<dbReference type="Gene3D" id="1.10.1040.10">
    <property type="entry name" value="N-(1-d-carboxylethyl)-l-norvaline Dehydrogenase, domain 2"/>
    <property type="match status" value="1"/>
</dbReference>
<dbReference type="Gene3D" id="3.40.50.720">
    <property type="entry name" value="NAD(P)-binding Rossmann-like Domain"/>
    <property type="match status" value="1"/>
</dbReference>
<dbReference type="HAMAP" id="MF_00196">
    <property type="entry name" value="Mannitol_dehydrog"/>
    <property type="match status" value="1"/>
</dbReference>
<dbReference type="InterPro" id="IPR008927">
    <property type="entry name" value="6-PGluconate_DH-like_C_sf"/>
</dbReference>
<dbReference type="InterPro" id="IPR013328">
    <property type="entry name" value="6PGD_dom2"/>
</dbReference>
<dbReference type="InterPro" id="IPR023028">
    <property type="entry name" value="Mannitol_1_phos_5_DH"/>
</dbReference>
<dbReference type="InterPro" id="IPR000669">
    <property type="entry name" value="Mannitol_DH"/>
</dbReference>
<dbReference type="InterPro" id="IPR013118">
    <property type="entry name" value="Mannitol_DH_C"/>
</dbReference>
<dbReference type="InterPro" id="IPR023027">
    <property type="entry name" value="Mannitol_DH_CS"/>
</dbReference>
<dbReference type="InterPro" id="IPR013131">
    <property type="entry name" value="Mannitol_DH_N"/>
</dbReference>
<dbReference type="InterPro" id="IPR036291">
    <property type="entry name" value="NAD(P)-bd_dom_sf"/>
</dbReference>
<dbReference type="NCBIfam" id="NF002646">
    <property type="entry name" value="PRK02318.1-2"/>
    <property type="match status" value="1"/>
</dbReference>
<dbReference type="NCBIfam" id="NF002647">
    <property type="entry name" value="PRK02318.1-3"/>
    <property type="match status" value="1"/>
</dbReference>
<dbReference type="NCBIfam" id="NF002650">
    <property type="entry name" value="PRK02318.2-2"/>
    <property type="match status" value="1"/>
</dbReference>
<dbReference type="NCBIfam" id="NF002652">
    <property type="entry name" value="PRK02318.2-5"/>
    <property type="match status" value="1"/>
</dbReference>
<dbReference type="PANTHER" id="PTHR30524:SF0">
    <property type="entry name" value="ALTRONATE OXIDOREDUCTASE-RELATED"/>
    <property type="match status" value="1"/>
</dbReference>
<dbReference type="PANTHER" id="PTHR30524">
    <property type="entry name" value="MANNITOL-1-PHOSPHATE 5-DEHYDROGENASE"/>
    <property type="match status" value="1"/>
</dbReference>
<dbReference type="Pfam" id="PF01232">
    <property type="entry name" value="Mannitol_dh"/>
    <property type="match status" value="1"/>
</dbReference>
<dbReference type="Pfam" id="PF08125">
    <property type="entry name" value="Mannitol_dh_C"/>
    <property type="match status" value="1"/>
</dbReference>
<dbReference type="PRINTS" id="PR00084">
    <property type="entry name" value="MTLDHDRGNASE"/>
</dbReference>
<dbReference type="SUPFAM" id="SSF48179">
    <property type="entry name" value="6-phosphogluconate dehydrogenase C-terminal domain-like"/>
    <property type="match status" value="1"/>
</dbReference>
<dbReference type="SUPFAM" id="SSF51735">
    <property type="entry name" value="NAD(P)-binding Rossmann-fold domains"/>
    <property type="match status" value="1"/>
</dbReference>
<dbReference type="PROSITE" id="PS00974">
    <property type="entry name" value="MANNITOL_DHGENASE"/>
    <property type="match status" value="1"/>
</dbReference>
<sequence>MKNAVHFGAGNIGRGFIGKLLADAEVEVTFADVDVPLVDQLSHKQEYKVKVVGTECKIDTVTHVTAVNSASEDVIDRIVKTDLVTTAVGPNVLDIIAKTIAKGIAKRFEAGNDAPLNIIACENMVRGTTHLKGEVYKHLDKSLHAKADELVGFVDSAVDRIVPPAEAANDDPLEVTVESFSEWIVDEQQFKGDIPNIAGMEKTNNLMAFVERKLFTLNTGHCITAYLGCLKGHRTIREAIEDPNIHAEVKQAMQESGEVLIRRYGFDHDMHNAYIEKILGRFANPYLVDEVDRVGRQPIRKLGANDRLVKPLLGTIEYGTENQTLLKGIAAALKYTNDTDPQAVELQTSLKEVGVTKTLAKYTGLAEDSDEVAQIETLYNQL</sequence>
<name>MTLD_VIBPA</name>
<feature type="chain" id="PRO_0000170730" description="Mannitol-1-phosphate 5-dehydrogenase">
    <location>
        <begin position="1"/>
        <end position="382"/>
    </location>
</feature>
<feature type="binding site" evidence="1">
    <location>
        <begin position="4"/>
        <end position="15"/>
    </location>
    <ligand>
        <name>NAD(+)</name>
        <dbReference type="ChEBI" id="CHEBI:57540"/>
    </ligand>
</feature>
<comment type="catalytic activity">
    <reaction evidence="1">
        <text>D-mannitol 1-phosphate + NAD(+) = beta-D-fructose 6-phosphate + NADH + H(+)</text>
        <dbReference type="Rhea" id="RHEA:19661"/>
        <dbReference type="ChEBI" id="CHEBI:15378"/>
        <dbReference type="ChEBI" id="CHEBI:57540"/>
        <dbReference type="ChEBI" id="CHEBI:57634"/>
        <dbReference type="ChEBI" id="CHEBI:57945"/>
        <dbReference type="ChEBI" id="CHEBI:61381"/>
        <dbReference type="EC" id="1.1.1.17"/>
    </reaction>
</comment>
<comment type="similarity">
    <text evidence="1">Belongs to the mannitol dehydrogenase family.</text>
</comment>
<reference key="1">
    <citation type="journal article" date="2003" name="Lancet">
        <title>Genome sequence of Vibrio parahaemolyticus: a pathogenic mechanism distinct from that of V. cholerae.</title>
        <authorList>
            <person name="Makino K."/>
            <person name="Oshima K."/>
            <person name="Kurokawa K."/>
            <person name="Yokoyama K."/>
            <person name="Uda T."/>
            <person name="Tagomori K."/>
            <person name="Iijima Y."/>
            <person name="Najima M."/>
            <person name="Nakano M."/>
            <person name="Yamashita A."/>
            <person name="Kubota Y."/>
            <person name="Kimura S."/>
            <person name="Yasunaga T."/>
            <person name="Honda T."/>
            <person name="Shinagawa H."/>
            <person name="Hattori M."/>
            <person name="Iida T."/>
        </authorList>
    </citation>
    <scope>NUCLEOTIDE SEQUENCE [LARGE SCALE GENOMIC DNA]</scope>
    <source>
        <strain>RIMD 2210633</strain>
    </source>
</reference>
<protein>
    <recommendedName>
        <fullName evidence="1">Mannitol-1-phosphate 5-dehydrogenase</fullName>
        <ecNumber evidence="1">1.1.1.17</ecNumber>
    </recommendedName>
</protein>
<organism>
    <name type="scientific">Vibrio parahaemolyticus serotype O3:K6 (strain RIMD 2210633)</name>
    <dbReference type="NCBI Taxonomy" id="223926"/>
    <lineage>
        <taxon>Bacteria</taxon>
        <taxon>Pseudomonadati</taxon>
        <taxon>Pseudomonadota</taxon>
        <taxon>Gammaproteobacteria</taxon>
        <taxon>Vibrionales</taxon>
        <taxon>Vibrionaceae</taxon>
        <taxon>Vibrio</taxon>
    </lineage>
</organism>
<keyword id="KW-0520">NAD</keyword>
<keyword id="KW-0560">Oxidoreductase</keyword>
<proteinExistence type="inferred from homology"/>